<dbReference type="EC" id="4.3.1.18" evidence="1"/>
<dbReference type="EMBL" id="CP000155">
    <property type="protein sequence ID" value="ABC29747.1"/>
    <property type="molecule type" value="Genomic_DNA"/>
</dbReference>
<dbReference type="RefSeq" id="WP_011396816.1">
    <property type="nucleotide sequence ID" value="NC_007645.1"/>
</dbReference>
<dbReference type="SMR" id="Q2SHX7"/>
<dbReference type="STRING" id="349521.HCH_02978"/>
<dbReference type="KEGG" id="hch:HCH_02978"/>
<dbReference type="eggNOG" id="COG3048">
    <property type="taxonomic scope" value="Bacteria"/>
</dbReference>
<dbReference type="HOGENOM" id="CLU_035707_0_0_6"/>
<dbReference type="OrthoDB" id="9780546at2"/>
<dbReference type="Proteomes" id="UP000000238">
    <property type="component" value="Chromosome"/>
</dbReference>
<dbReference type="GO" id="GO:0008721">
    <property type="term" value="F:D-serine ammonia-lyase activity"/>
    <property type="evidence" value="ECO:0007669"/>
    <property type="project" value="UniProtKB-EC"/>
</dbReference>
<dbReference type="GO" id="GO:0016836">
    <property type="term" value="F:hydro-lyase activity"/>
    <property type="evidence" value="ECO:0007669"/>
    <property type="project" value="UniProtKB-UniRule"/>
</dbReference>
<dbReference type="GO" id="GO:0030170">
    <property type="term" value="F:pyridoxal phosphate binding"/>
    <property type="evidence" value="ECO:0007669"/>
    <property type="project" value="InterPro"/>
</dbReference>
<dbReference type="GO" id="GO:0036088">
    <property type="term" value="P:D-serine catabolic process"/>
    <property type="evidence" value="ECO:0007669"/>
    <property type="project" value="TreeGrafter"/>
</dbReference>
<dbReference type="GO" id="GO:0009097">
    <property type="term" value="P:isoleucine biosynthetic process"/>
    <property type="evidence" value="ECO:0007669"/>
    <property type="project" value="TreeGrafter"/>
</dbReference>
<dbReference type="Gene3D" id="3.40.50.1100">
    <property type="match status" value="2"/>
</dbReference>
<dbReference type="HAMAP" id="MF_01030">
    <property type="entry name" value="D_Ser_dehydrat"/>
    <property type="match status" value="1"/>
</dbReference>
<dbReference type="InterPro" id="IPR011780">
    <property type="entry name" value="D_Ser_am_lyase"/>
</dbReference>
<dbReference type="InterPro" id="IPR050147">
    <property type="entry name" value="Ser/Thr_Dehydratase"/>
</dbReference>
<dbReference type="InterPro" id="IPR001926">
    <property type="entry name" value="TrpB-like_PALP"/>
</dbReference>
<dbReference type="InterPro" id="IPR036052">
    <property type="entry name" value="TrpB-like_PALP_sf"/>
</dbReference>
<dbReference type="NCBIfam" id="TIGR02035">
    <property type="entry name" value="D_Ser_am_lyase"/>
    <property type="match status" value="1"/>
</dbReference>
<dbReference type="NCBIfam" id="NF002823">
    <property type="entry name" value="PRK02991.1"/>
    <property type="match status" value="1"/>
</dbReference>
<dbReference type="PANTHER" id="PTHR48078:SF9">
    <property type="entry name" value="D-SERINE DEHYDRATASE"/>
    <property type="match status" value="1"/>
</dbReference>
<dbReference type="PANTHER" id="PTHR48078">
    <property type="entry name" value="THREONINE DEHYDRATASE, MITOCHONDRIAL-RELATED"/>
    <property type="match status" value="1"/>
</dbReference>
<dbReference type="Pfam" id="PF00291">
    <property type="entry name" value="PALP"/>
    <property type="match status" value="1"/>
</dbReference>
<dbReference type="SUPFAM" id="SSF53686">
    <property type="entry name" value="Tryptophan synthase beta subunit-like PLP-dependent enzymes"/>
    <property type="match status" value="1"/>
</dbReference>
<protein>
    <recommendedName>
        <fullName evidence="1">Probable D-serine dehydratase</fullName>
        <ecNumber evidence="1">4.3.1.18</ecNumber>
    </recommendedName>
    <alternativeName>
        <fullName evidence="1">D-serine deaminase</fullName>
        <shortName evidence="1">DSD</shortName>
    </alternativeName>
</protein>
<sequence length="437" mass="47323">MNPLSIAQDELKAIQSSQPIVWLNRNYQNPASAPATPNVDALYAAEARLKRFAPLLQRLFPELEPSHGLIESSLIQADRLNNRINPVGGLLFLKADHDLPVAGSVKARGGIHEVLCFAESLALTHGVLKDVDSDYCTLASQSARDLFSKHTITVGSTGNLGLSIGVIGSALGFKTVVHMSSDAKEWKMERLRKRGVRVVEHDADYGAALEAGRLETIADPCGYFVDDERSPNLFMGYAVAAKRLQAQLEALNIKVDADHPLFVYLPAGVGGAPGGITYGLKHIFNDHVHCFFAEPVQSPCMLLGMAGAPGAAPTSIYELDLKNRTDADGLAVGAASQWVCDATRNLLSGVYTATDEQLYQQLYLLKDLENIEVEPSAAIGCLGPAMLTSEAGQKYLDSHRLSHRMENSVHIPWLTGGSFVPDEEYQRYLAKAVNVST</sequence>
<proteinExistence type="inferred from homology"/>
<gene>
    <name evidence="1" type="primary">dsdA</name>
    <name type="ordered locus">HCH_02978</name>
</gene>
<reference key="1">
    <citation type="journal article" date="2005" name="Nucleic Acids Res.">
        <title>Genomic blueprint of Hahella chejuensis, a marine microbe producing an algicidal agent.</title>
        <authorList>
            <person name="Jeong H."/>
            <person name="Yim J.H."/>
            <person name="Lee C."/>
            <person name="Choi S.-H."/>
            <person name="Park Y.K."/>
            <person name="Yoon S.H."/>
            <person name="Hur C.-G."/>
            <person name="Kang H.-Y."/>
            <person name="Kim D."/>
            <person name="Lee H.H."/>
            <person name="Park K.H."/>
            <person name="Park S.-H."/>
            <person name="Park H.-S."/>
            <person name="Lee H.K."/>
            <person name="Oh T.K."/>
            <person name="Kim J.F."/>
        </authorList>
    </citation>
    <scope>NUCLEOTIDE SEQUENCE [LARGE SCALE GENOMIC DNA]</scope>
    <source>
        <strain>KCTC 2396</strain>
    </source>
</reference>
<feature type="chain" id="PRO_0000291733" description="Probable D-serine dehydratase">
    <location>
        <begin position="1"/>
        <end position="437"/>
    </location>
</feature>
<feature type="modified residue" description="N6-(pyridoxal phosphate)lysine" evidence="1">
    <location>
        <position position="106"/>
    </location>
</feature>
<keyword id="KW-0456">Lyase</keyword>
<keyword id="KW-0663">Pyridoxal phosphate</keyword>
<keyword id="KW-1185">Reference proteome</keyword>
<comment type="catalytic activity">
    <reaction evidence="1">
        <text>D-serine = pyruvate + NH4(+)</text>
        <dbReference type="Rhea" id="RHEA:13977"/>
        <dbReference type="ChEBI" id="CHEBI:15361"/>
        <dbReference type="ChEBI" id="CHEBI:28938"/>
        <dbReference type="ChEBI" id="CHEBI:35247"/>
        <dbReference type="EC" id="4.3.1.18"/>
    </reaction>
</comment>
<comment type="cofactor">
    <cofactor evidence="1">
        <name>pyridoxal 5'-phosphate</name>
        <dbReference type="ChEBI" id="CHEBI:597326"/>
    </cofactor>
</comment>
<comment type="similarity">
    <text evidence="1">Belongs to the serine/threonine dehydratase family. DsdA subfamily.</text>
</comment>
<evidence type="ECO:0000255" key="1">
    <source>
        <dbReference type="HAMAP-Rule" id="MF_01030"/>
    </source>
</evidence>
<organism>
    <name type="scientific">Hahella chejuensis (strain KCTC 2396)</name>
    <dbReference type="NCBI Taxonomy" id="349521"/>
    <lineage>
        <taxon>Bacteria</taxon>
        <taxon>Pseudomonadati</taxon>
        <taxon>Pseudomonadota</taxon>
        <taxon>Gammaproteobacteria</taxon>
        <taxon>Oceanospirillales</taxon>
        <taxon>Hahellaceae</taxon>
        <taxon>Hahella</taxon>
    </lineage>
</organism>
<accession>Q2SHX7</accession>
<name>SDHD_HAHCH</name>